<protein>
    <recommendedName>
        <fullName evidence="1">Penicillin-insensitive murein endopeptidase</fullName>
        <ecNumber evidence="1">3.4.24.-</ecNumber>
    </recommendedName>
    <alternativeName>
        <fullName evidence="1">D-alanyl-D-alanine-endopeptidase</fullName>
        <shortName evidence="1">DD-endopeptidase</shortName>
    </alternativeName>
</protein>
<name>MEPA_SHIBS</name>
<organism>
    <name type="scientific">Shigella boydii serotype 4 (strain Sb227)</name>
    <dbReference type="NCBI Taxonomy" id="300268"/>
    <lineage>
        <taxon>Bacteria</taxon>
        <taxon>Pseudomonadati</taxon>
        <taxon>Pseudomonadota</taxon>
        <taxon>Gammaproteobacteria</taxon>
        <taxon>Enterobacterales</taxon>
        <taxon>Enterobacteriaceae</taxon>
        <taxon>Shigella</taxon>
    </lineage>
</organism>
<comment type="function">
    <text evidence="1">Murein endopeptidase that cleaves the D-alanyl-meso-2,6-diamino-pimelyl amide bond that connects peptidoglycan strands. Likely plays a role in the removal of murein from the sacculus.</text>
</comment>
<comment type="cofactor">
    <cofactor evidence="1">
        <name>Zn(2+)</name>
        <dbReference type="ChEBI" id="CHEBI:29105"/>
    </cofactor>
    <text evidence="1">Binds 2 Zn(2+) ions per subunit. Zn(2+) ion 1 is bound in the active site. Zn(2+) ion 2 is bound at the dimer interface by residues from both subunits.</text>
</comment>
<comment type="subunit">
    <text evidence="1">Dimer.</text>
</comment>
<comment type="subcellular location">
    <subcellularLocation>
        <location evidence="1">Periplasm</location>
    </subcellularLocation>
</comment>
<comment type="similarity">
    <text evidence="1">Belongs to the peptidase M74 family.</text>
</comment>
<evidence type="ECO:0000255" key="1">
    <source>
        <dbReference type="HAMAP-Rule" id="MF_01623"/>
    </source>
</evidence>
<evidence type="ECO:0000256" key="2">
    <source>
        <dbReference type="SAM" id="MobiDB-lite"/>
    </source>
</evidence>
<sequence>MNKTAIALLALLASSASLAATPWQKITQPVPGSAQSIGSFSNGCIVGADTLPIQSEHYQVMRTDQRRYFGHPDLVMFIQRLSSQVSNLGMGTVLIGDMGMPAGGRFNGGHASHQTGLDVDIFLQLPKTRWTSAQLLRPQALDLVSRDGKHVVSTLWKPEIFSLIKLAAQDKDVTRIFVNPAIKQQLCLDAGTDRDWLRKVRPWFQHRAHMHVRLRCPADSLECEDQPLPPPGDGCGAELQSWFAPPKPGTTKPEKKTPPPLPPSCQALLDEHVI</sequence>
<keyword id="KW-1015">Disulfide bond</keyword>
<keyword id="KW-0378">Hydrolase</keyword>
<keyword id="KW-0479">Metal-binding</keyword>
<keyword id="KW-0482">Metalloprotease</keyword>
<keyword id="KW-0574">Periplasm</keyword>
<keyword id="KW-0645">Protease</keyword>
<keyword id="KW-0732">Signal</keyword>
<keyword id="KW-0862">Zinc</keyword>
<dbReference type="EC" id="3.4.24.-" evidence="1"/>
<dbReference type="EMBL" id="CP000036">
    <property type="protein sequence ID" value="ABB66928.1"/>
    <property type="molecule type" value="Genomic_DNA"/>
</dbReference>
<dbReference type="RefSeq" id="WP_001043819.1">
    <property type="nucleotide sequence ID" value="NC_007613.1"/>
</dbReference>
<dbReference type="SMR" id="Q31YD0"/>
<dbReference type="MEROPS" id="M74.001"/>
<dbReference type="KEGG" id="sbo:SBO_2365"/>
<dbReference type="HOGENOM" id="CLU_052496_0_0_6"/>
<dbReference type="Proteomes" id="UP000007067">
    <property type="component" value="Chromosome"/>
</dbReference>
<dbReference type="GO" id="GO:0030288">
    <property type="term" value="C:outer membrane-bounded periplasmic space"/>
    <property type="evidence" value="ECO:0007669"/>
    <property type="project" value="InterPro"/>
</dbReference>
<dbReference type="GO" id="GO:0046872">
    <property type="term" value="F:metal ion binding"/>
    <property type="evidence" value="ECO:0007669"/>
    <property type="project" value="UniProtKB-KW"/>
</dbReference>
<dbReference type="GO" id="GO:0004222">
    <property type="term" value="F:metalloendopeptidase activity"/>
    <property type="evidence" value="ECO:0007669"/>
    <property type="project" value="UniProtKB-UniRule"/>
</dbReference>
<dbReference type="GO" id="GO:0004252">
    <property type="term" value="F:serine-type endopeptidase activity"/>
    <property type="evidence" value="ECO:0007669"/>
    <property type="project" value="InterPro"/>
</dbReference>
<dbReference type="GO" id="GO:0000270">
    <property type="term" value="P:peptidoglycan metabolic process"/>
    <property type="evidence" value="ECO:0007669"/>
    <property type="project" value="UniProtKB-UniRule"/>
</dbReference>
<dbReference type="GO" id="GO:0006508">
    <property type="term" value="P:proteolysis"/>
    <property type="evidence" value="ECO:0007669"/>
    <property type="project" value="UniProtKB-KW"/>
</dbReference>
<dbReference type="FunFam" id="3.30.1380.10:FF:000002">
    <property type="entry name" value="Penicillin-insensitive murein endopeptidase"/>
    <property type="match status" value="1"/>
</dbReference>
<dbReference type="Gene3D" id="3.30.1380.10">
    <property type="match status" value="1"/>
</dbReference>
<dbReference type="HAMAP" id="MF_01623">
    <property type="entry name" value="MepA"/>
    <property type="match status" value="1"/>
</dbReference>
<dbReference type="InterPro" id="IPR009045">
    <property type="entry name" value="Hedgehog_sig/DD-Pept_Zn-bd_sf"/>
</dbReference>
<dbReference type="InterPro" id="IPR005073">
    <property type="entry name" value="Peptidase_M74"/>
</dbReference>
<dbReference type="NCBIfam" id="NF006947">
    <property type="entry name" value="PRK09429.1"/>
    <property type="match status" value="1"/>
</dbReference>
<dbReference type="Pfam" id="PF03411">
    <property type="entry name" value="Peptidase_M74"/>
    <property type="match status" value="1"/>
</dbReference>
<dbReference type="PIRSF" id="PIRSF018455">
    <property type="entry name" value="MepA"/>
    <property type="match status" value="1"/>
</dbReference>
<dbReference type="SUPFAM" id="SSF55166">
    <property type="entry name" value="Hedgehog/DD-peptidase"/>
    <property type="match status" value="1"/>
</dbReference>
<gene>
    <name evidence="1" type="primary">mepA</name>
    <name type="ordered locus">SBO_2365</name>
</gene>
<proteinExistence type="inferred from homology"/>
<feature type="signal peptide" evidence="1">
    <location>
        <begin position="1"/>
        <end position="19"/>
    </location>
</feature>
<feature type="chain" id="PRO_0000292556" description="Penicillin-insensitive murein endopeptidase">
    <location>
        <begin position="20"/>
        <end position="274"/>
    </location>
</feature>
<feature type="region of interest" description="Disordered" evidence="2">
    <location>
        <begin position="228"/>
        <end position="265"/>
    </location>
</feature>
<feature type="binding site" evidence="1">
    <location>
        <position position="110"/>
    </location>
    <ligand>
        <name>Zn(2+)</name>
        <dbReference type="ChEBI" id="CHEBI:29105"/>
        <label>1</label>
    </ligand>
</feature>
<feature type="binding site" evidence="1">
    <location>
        <position position="113"/>
    </location>
    <ligand>
        <name>Zn(2+)</name>
        <dbReference type="ChEBI" id="CHEBI:29105"/>
        <label>1</label>
    </ligand>
</feature>
<feature type="binding site" evidence="1">
    <location>
        <position position="120"/>
    </location>
    <ligand>
        <name>Zn(2+)</name>
        <dbReference type="ChEBI" id="CHEBI:29105"/>
        <label>1</label>
    </ligand>
</feature>
<feature type="binding site" evidence="1">
    <location>
        <position position="147"/>
    </location>
    <ligand>
        <name>Zn(2+)</name>
        <dbReference type="ChEBI" id="CHEBI:29105"/>
        <label>2</label>
    </ligand>
</feature>
<feature type="binding site" evidence="1">
    <location>
        <position position="150"/>
    </location>
    <ligand>
        <name>Zn(2+)</name>
        <dbReference type="ChEBI" id="CHEBI:29105"/>
        <label>2</label>
    </ligand>
</feature>
<feature type="binding site" evidence="1">
    <location>
        <position position="211"/>
    </location>
    <ligand>
        <name>Zn(2+)</name>
        <dbReference type="ChEBI" id="CHEBI:29105"/>
        <label>1</label>
    </ligand>
</feature>
<feature type="disulfide bond" evidence="1">
    <location>
        <begin position="44"/>
        <end position="265"/>
    </location>
</feature>
<feature type="disulfide bond" evidence="1">
    <location>
        <begin position="187"/>
        <end position="235"/>
    </location>
</feature>
<feature type="disulfide bond" evidence="1">
    <location>
        <begin position="216"/>
        <end position="223"/>
    </location>
</feature>
<reference key="1">
    <citation type="journal article" date="2005" name="Nucleic Acids Res.">
        <title>Genome dynamics and diversity of Shigella species, the etiologic agents of bacillary dysentery.</title>
        <authorList>
            <person name="Yang F."/>
            <person name="Yang J."/>
            <person name="Zhang X."/>
            <person name="Chen L."/>
            <person name="Jiang Y."/>
            <person name="Yan Y."/>
            <person name="Tang X."/>
            <person name="Wang J."/>
            <person name="Xiong Z."/>
            <person name="Dong J."/>
            <person name="Xue Y."/>
            <person name="Zhu Y."/>
            <person name="Xu X."/>
            <person name="Sun L."/>
            <person name="Chen S."/>
            <person name="Nie H."/>
            <person name="Peng J."/>
            <person name="Xu J."/>
            <person name="Wang Y."/>
            <person name="Yuan Z."/>
            <person name="Wen Y."/>
            <person name="Yao Z."/>
            <person name="Shen Y."/>
            <person name="Qiang B."/>
            <person name="Hou Y."/>
            <person name="Yu J."/>
            <person name="Jin Q."/>
        </authorList>
    </citation>
    <scope>NUCLEOTIDE SEQUENCE [LARGE SCALE GENOMIC DNA]</scope>
    <source>
        <strain>Sb227</strain>
    </source>
</reference>
<accession>Q31YD0</accession>